<dbReference type="EC" id="1.13.11.11" evidence="1"/>
<dbReference type="EMBL" id="BX640414">
    <property type="protein sequence ID" value="CAE41529.1"/>
    <property type="molecule type" value="Genomic_DNA"/>
</dbReference>
<dbReference type="RefSeq" id="NP_880005.1">
    <property type="nucleotide sequence ID" value="NC_002929.2"/>
</dbReference>
<dbReference type="RefSeq" id="WP_003810516.1">
    <property type="nucleotide sequence ID" value="NZ_CP039022.1"/>
</dbReference>
<dbReference type="SMR" id="Q7VYS6"/>
<dbReference type="STRING" id="257313.BP1233"/>
<dbReference type="PaxDb" id="257313-BP1233"/>
<dbReference type="GeneID" id="69601147"/>
<dbReference type="KEGG" id="bpe:BP1233"/>
<dbReference type="PATRIC" id="fig|257313.5.peg.1329"/>
<dbReference type="eggNOG" id="COG3483">
    <property type="taxonomic scope" value="Bacteria"/>
</dbReference>
<dbReference type="HOGENOM" id="CLU_063240_0_0_4"/>
<dbReference type="UniPathway" id="UPA00333">
    <property type="reaction ID" value="UER00453"/>
</dbReference>
<dbReference type="Proteomes" id="UP000002676">
    <property type="component" value="Chromosome"/>
</dbReference>
<dbReference type="GO" id="GO:0020037">
    <property type="term" value="F:heme binding"/>
    <property type="evidence" value="ECO:0000250"/>
    <property type="project" value="UniProtKB"/>
</dbReference>
<dbReference type="GO" id="GO:0046872">
    <property type="term" value="F:metal ion binding"/>
    <property type="evidence" value="ECO:0007669"/>
    <property type="project" value="UniProtKB-KW"/>
</dbReference>
<dbReference type="GO" id="GO:0004833">
    <property type="term" value="F:tryptophan 2,3-dioxygenase activity"/>
    <property type="evidence" value="ECO:0000250"/>
    <property type="project" value="UniProtKB"/>
</dbReference>
<dbReference type="GO" id="GO:0019442">
    <property type="term" value="P:L-tryptophan catabolic process to acetyl-CoA"/>
    <property type="evidence" value="ECO:0007669"/>
    <property type="project" value="TreeGrafter"/>
</dbReference>
<dbReference type="GO" id="GO:0019441">
    <property type="term" value="P:L-tryptophan catabolic process to kynurenine"/>
    <property type="evidence" value="ECO:0000250"/>
    <property type="project" value="UniProtKB"/>
</dbReference>
<dbReference type="FunFam" id="1.20.58.480:FF:000001">
    <property type="entry name" value="Tryptophan 2,3-dioxygenase"/>
    <property type="match status" value="1"/>
</dbReference>
<dbReference type="Gene3D" id="1.20.58.480">
    <property type="match status" value="1"/>
</dbReference>
<dbReference type="HAMAP" id="MF_01972">
    <property type="entry name" value="T23O"/>
    <property type="match status" value="1"/>
</dbReference>
<dbReference type="InterPro" id="IPR037217">
    <property type="entry name" value="Trp/Indoleamine_2_3_dOase-like"/>
</dbReference>
<dbReference type="InterPro" id="IPR017485">
    <property type="entry name" value="Trp_2-3-dOase_bac"/>
</dbReference>
<dbReference type="InterPro" id="IPR004981">
    <property type="entry name" value="Trp_2_3_dOase"/>
</dbReference>
<dbReference type="NCBIfam" id="TIGR03036">
    <property type="entry name" value="trp_2_3_diox"/>
    <property type="match status" value="1"/>
</dbReference>
<dbReference type="PANTHER" id="PTHR10138">
    <property type="entry name" value="TRYPTOPHAN 2,3-DIOXYGENASE"/>
    <property type="match status" value="1"/>
</dbReference>
<dbReference type="PANTHER" id="PTHR10138:SF0">
    <property type="entry name" value="TRYPTOPHAN 2,3-DIOXYGENASE"/>
    <property type="match status" value="1"/>
</dbReference>
<dbReference type="Pfam" id="PF03301">
    <property type="entry name" value="Trp_dioxygenase"/>
    <property type="match status" value="1"/>
</dbReference>
<dbReference type="SUPFAM" id="SSF140959">
    <property type="entry name" value="Indolic compounds 2,3-dioxygenase-like"/>
    <property type="match status" value="1"/>
</dbReference>
<proteinExistence type="inferred from homology"/>
<evidence type="ECO:0000255" key="1">
    <source>
        <dbReference type="HAMAP-Rule" id="MF_01972"/>
    </source>
</evidence>
<sequence>MQPTPTQRPEAIVHDEKAQLDFARDMSYGDYLHLDELLGAQHPLSPEHNEMLFIVQHQTSELWMKLMLHELRAAIAAIQQDRLQPAFKMLARVSKILEQLVSAWDVLATMTPPEYSALRPYLAHSSGFQSYQYRQIEYLLGNKNAAMLQPHAHRADLLAQVRAAFEAPSLYDEALRFLARSGLAVPAGALQRDWTQPYRADDQVEQAWLTVYRQSERYWNQYQLGEKLTDLEDAFRLWRFRHVTTVERIIGFKRGTGGTSGVTYLRKMLEVVLFPEIWKLRTDL</sequence>
<reference key="1">
    <citation type="journal article" date="2003" name="Nat. Genet.">
        <title>Comparative analysis of the genome sequences of Bordetella pertussis, Bordetella parapertussis and Bordetella bronchiseptica.</title>
        <authorList>
            <person name="Parkhill J."/>
            <person name="Sebaihia M."/>
            <person name="Preston A."/>
            <person name="Murphy L.D."/>
            <person name="Thomson N.R."/>
            <person name="Harris D.E."/>
            <person name="Holden M.T.G."/>
            <person name="Churcher C.M."/>
            <person name="Bentley S.D."/>
            <person name="Mungall K.L."/>
            <person name="Cerdeno-Tarraga A.-M."/>
            <person name="Temple L."/>
            <person name="James K.D."/>
            <person name="Harris B."/>
            <person name="Quail M.A."/>
            <person name="Achtman M."/>
            <person name="Atkin R."/>
            <person name="Baker S."/>
            <person name="Basham D."/>
            <person name="Bason N."/>
            <person name="Cherevach I."/>
            <person name="Chillingworth T."/>
            <person name="Collins M."/>
            <person name="Cronin A."/>
            <person name="Davis P."/>
            <person name="Doggett J."/>
            <person name="Feltwell T."/>
            <person name="Goble A."/>
            <person name="Hamlin N."/>
            <person name="Hauser H."/>
            <person name="Holroyd S."/>
            <person name="Jagels K."/>
            <person name="Leather S."/>
            <person name="Moule S."/>
            <person name="Norberczak H."/>
            <person name="O'Neil S."/>
            <person name="Ormond D."/>
            <person name="Price C."/>
            <person name="Rabbinowitsch E."/>
            <person name="Rutter S."/>
            <person name="Sanders M."/>
            <person name="Saunders D."/>
            <person name="Seeger K."/>
            <person name="Sharp S."/>
            <person name="Simmonds M."/>
            <person name="Skelton J."/>
            <person name="Squares R."/>
            <person name="Squares S."/>
            <person name="Stevens K."/>
            <person name="Unwin L."/>
            <person name="Whitehead S."/>
            <person name="Barrell B.G."/>
            <person name="Maskell D.J."/>
        </authorList>
    </citation>
    <scope>NUCLEOTIDE SEQUENCE [LARGE SCALE GENOMIC DNA]</scope>
    <source>
        <strain>Tohama I / ATCC BAA-589 / NCTC 13251</strain>
    </source>
</reference>
<organism>
    <name type="scientific">Bordetella pertussis (strain Tohama I / ATCC BAA-589 / NCTC 13251)</name>
    <dbReference type="NCBI Taxonomy" id="257313"/>
    <lineage>
        <taxon>Bacteria</taxon>
        <taxon>Pseudomonadati</taxon>
        <taxon>Pseudomonadota</taxon>
        <taxon>Betaproteobacteria</taxon>
        <taxon>Burkholderiales</taxon>
        <taxon>Alcaligenaceae</taxon>
        <taxon>Bordetella</taxon>
    </lineage>
</organism>
<gene>
    <name evidence="1" type="primary">kynA</name>
    <name type="ordered locus">BP1233</name>
</gene>
<name>T23O_BORPE</name>
<protein>
    <recommendedName>
        <fullName evidence="1">Tryptophan 2,3-dioxygenase</fullName>
        <shortName evidence="1">TDO</shortName>
        <ecNumber evidence="1">1.13.11.11</ecNumber>
    </recommendedName>
    <alternativeName>
        <fullName evidence="1">Tryptamin 2,3-dioxygenase</fullName>
    </alternativeName>
    <alternativeName>
        <fullName evidence="1">Tryptophan oxygenase</fullName>
        <shortName evidence="1">TO</shortName>
        <shortName evidence="1">TRPO</shortName>
    </alternativeName>
    <alternativeName>
        <fullName evidence="1">Tryptophan pyrrolase</fullName>
    </alternativeName>
    <alternativeName>
        <fullName evidence="1">Tryptophanase</fullName>
    </alternativeName>
</protein>
<keyword id="KW-0223">Dioxygenase</keyword>
<keyword id="KW-0349">Heme</keyword>
<keyword id="KW-0408">Iron</keyword>
<keyword id="KW-0479">Metal-binding</keyword>
<keyword id="KW-0560">Oxidoreductase</keyword>
<keyword id="KW-1185">Reference proteome</keyword>
<keyword id="KW-0823">Tryptophan catabolism</keyword>
<feature type="chain" id="PRO_0000360092" description="Tryptophan 2,3-dioxygenase">
    <location>
        <begin position="1"/>
        <end position="284"/>
    </location>
</feature>
<feature type="binding site" evidence="1">
    <location>
        <begin position="53"/>
        <end position="57"/>
    </location>
    <ligand>
        <name>substrate</name>
    </ligand>
</feature>
<feature type="binding site" evidence="1">
    <location>
        <position position="115"/>
    </location>
    <ligand>
        <name>substrate</name>
    </ligand>
</feature>
<feature type="binding site" evidence="1">
    <location>
        <position position="119"/>
    </location>
    <ligand>
        <name>substrate</name>
    </ligand>
</feature>
<feature type="binding site" description="axial binding residue" evidence="1">
    <location>
        <position position="242"/>
    </location>
    <ligand>
        <name>heme</name>
        <dbReference type="ChEBI" id="CHEBI:30413"/>
    </ligand>
    <ligandPart>
        <name>Fe</name>
        <dbReference type="ChEBI" id="CHEBI:18248"/>
    </ligandPart>
</feature>
<feature type="binding site" evidence="1">
    <location>
        <position position="256"/>
    </location>
    <ligand>
        <name>substrate</name>
    </ligand>
</feature>
<comment type="function">
    <text evidence="1">Heme-dependent dioxygenase that catalyzes the oxidative cleavage of the L-tryptophan (L-Trp) pyrrole ring and converts L-tryptophan to N-formyl-L-kynurenine. Catalyzes the oxidative cleavage of the indole moiety.</text>
</comment>
<comment type="catalytic activity">
    <reaction evidence="1">
        <text>L-tryptophan + O2 = N-formyl-L-kynurenine</text>
        <dbReference type="Rhea" id="RHEA:24536"/>
        <dbReference type="ChEBI" id="CHEBI:15379"/>
        <dbReference type="ChEBI" id="CHEBI:57912"/>
        <dbReference type="ChEBI" id="CHEBI:58629"/>
        <dbReference type="EC" id="1.13.11.11"/>
    </reaction>
</comment>
<comment type="cofactor">
    <cofactor evidence="1">
        <name>heme</name>
        <dbReference type="ChEBI" id="CHEBI:30413"/>
    </cofactor>
    <text evidence="1">Binds 1 heme group per subunit.</text>
</comment>
<comment type="pathway">
    <text evidence="1">Amino-acid degradation; L-tryptophan degradation via kynurenine pathway; L-kynurenine from L-tryptophan: step 1/2.</text>
</comment>
<comment type="subunit">
    <text evidence="1">Homotetramer.</text>
</comment>
<comment type="similarity">
    <text evidence="1">Belongs to the tryptophan 2,3-dioxygenase family.</text>
</comment>
<accession>Q7VYS6</accession>